<keyword id="KW-1015">Disulfide bond</keyword>
<keyword id="KW-0646">Protease inhibitor</keyword>
<keyword id="KW-0964">Secreted</keyword>
<keyword id="KW-0732">Signal</keyword>
<keyword id="KW-0789">Thiol protease inhibitor</keyword>
<organism>
    <name type="scientific">Ornithodoros moubata</name>
    <name type="common">Soft tick</name>
    <name type="synonym">Argasid tick</name>
    <dbReference type="NCBI Taxonomy" id="6938"/>
    <lineage>
        <taxon>Eukaryota</taxon>
        <taxon>Metazoa</taxon>
        <taxon>Ecdysozoa</taxon>
        <taxon>Arthropoda</taxon>
        <taxon>Chelicerata</taxon>
        <taxon>Arachnida</taxon>
        <taxon>Acari</taxon>
        <taxon>Parasitiformes</taxon>
        <taxon>Ixodida</taxon>
        <taxon>Ixodoidea</taxon>
        <taxon>Argasidae</taxon>
        <taxon>Ornithodorinae</taxon>
        <taxon>Ornithodoros</taxon>
    </lineage>
</organism>
<proteinExistence type="evidence at transcript level"/>
<evidence type="ECO:0000250" key="1">
    <source>
        <dbReference type="UniProtKB" id="Q6QD55"/>
    </source>
</evidence>
<evidence type="ECO:0000255" key="2"/>
<evidence type="ECO:0000269" key="3">
    <source>
    </source>
</evidence>
<evidence type="ECO:0000303" key="4">
    <source>
    </source>
</evidence>
<evidence type="ECO:0000305" key="5"/>
<evidence type="ECO:0000305" key="6">
    <source>
    </source>
</evidence>
<evidence type="ECO:0000312" key="7">
    <source>
        <dbReference type="EMBL" id="AAS01021.1"/>
    </source>
</evidence>
<protein>
    <recommendedName>
        <fullName evidence="4">Cystatin-1</fullName>
    </recommendedName>
</protein>
<sequence length="128" mass="14085">MIRSAVVLTVLVGVCLAQRGFVGGWSQVDPKIRPDLLELAHFAVASQTAGLEYYHTVLELTKASQQVVAGVNYKLTLKVAPSKCKVSETVYSKELCQPQLNAAPKDCEAQLYVVPWRNTKEVTSFECN</sequence>
<name>CYS1_ORNMO</name>
<feature type="signal peptide" evidence="2">
    <location>
        <begin position="1"/>
        <end position="17"/>
    </location>
</feature>
<feature type="chain" id="PRO_5018587278" description="Cystatin-1">
    <location>
        <begin position="18"/>
        <end position="128"/>
    </location>
</feature>
<feature type="domain" description="Cystatin" evidence="2">
    <location>
        <begin position="20"/>
        <end position="128"/>
    </location>
</feature>
<feature type="disulfide bond" evidence="1">
    <location>
        <begin position="84"/>
        <end position="96"/>
    </location>
</feature>
<feature type="disulfide bond" evidence="1">
    <location>
        <begin position="107"/>
        <end position="127"/>
    </location>
</feature>
<comment type="function">
    <text evidence="3">Inhibitor of cysteine proteinases. Strongly inhibits mammalian cathepsin B and H, and moderately inhibits mammalian cathepsin C. Also inhibits endogenous cathepsin B-like but not cathepsin C-like proteinases. May have a protective role against undesired digestion of a stored blood meal by endogenous peptidases.</text>
</comment>
<comment type="subcellular location">
    <subcellularLocation>
        <location evidence="6">Secreted</location>
    </subcellularLocation>
</comment>
<comment type="tissue specificity">
    <text evidence="3">Mainly expressed in gut.</text>
</comment>
<comment type="induction">
    <text evidence="3">Down-regulated by a blood meal.</text>
</comment>
<comment type="similarity">
    <text evidence="5">Belongs to the cystatin family.</text>
</comment>
<accession>Q6QZV5</accession>
<reference evidence="7" key="1">
    <citation type="journal article" date="2006" name="Biol. Chem.">
        <title>Two secreted cystatins of the soft tick Ornithodoros moubata: differential expression pattern and inhibitory specificity.</title>
        <authorList>
            <person name="Grunclova L."/>
            <person name="Horn M."/>
            <person name="Vancova M."/>
            <person name="Sojka D."/>
            <person name="Franta Z."/>
            <person name="Mares M."/>
            <person name="Kopacek P."/>
        </authorList>
    </citation>
    <scope>NUCLEOTIDE SEQUENCE [MRNA]</scope>
    <scope>FUNCTION</scope>
    <scope>INDUCTION</scope>
    <scope>TISSUE SPECIFICITY</scope>
    <scope>RECOMBINANT EXPRESSION</scope>
    <source>
        <tissue>Gut</tissue>
    </source>
</reference>
<dbReference type="EMBL" id="AY521024">
    <property type="protein sequence ID" value="AAS01021.1"/>
    <property type="molecule type" value="mRNA"/>
</dbReference>
<dbReference type="SMR" id="Q6QZV5"/>
<dbReference type="MEROPS" id="I25.049"/>
<dbReference type="GO" id="GO:0005737">
    <property type="term" value="C:cytoplasm"/>
    <property type="evidence" value="ECO:0007669"/>
    <property type="project" value="TreeGrafter"/>
</dbReference>
<dbReference type="GO" id="GO:0005615">
    <property type="term" value="C:extracellular space"/>
    <property type="evidence" value="ECO:0007669"/>
    <property type="project" value="TreeGrafter"/>
</dbReference>
<dbReference type="GO" id="GO:0031982">
    <property type="term" value="C:vesicle"/>
    <property type="evidence" value="ECO:0007669"/>
    <property type="project" value="TreeGrafter"/>
</dbReference>
<dbReference type="GO" id="GO:0004869">
    <property type="term" value="F:cysteine-type endopeptidase inhibitor activity"/>
    <property type="evidence" value="ECO:0007669"/>
    <property type="project" value="UniProtKB-KW"/>
</dbReference>
<dbReference type="CDD" id="cd00042">
    <property type="entry name" value="CY"/>
    <property type="match status" value="1"/>
</dbReference>
<dbReference type="Gene3D" id="3.10.450.10">
    <property type="match status" value="1"/>
</dbReference>
<dbReference type="InterPro" id="IPR000010">
    <property type="entry name" value="Cystatin_dom"/>
</dbReference>
<dbReference type="InterPro" id="IPR046350">
    <property type="entry name" value="Cystatin_sf"/>
</dbReference>
<dbReference type="InterPro" id="IPR018073">
    <property type="entry name" value="Prot_inh_cystat_CS"/>
</dbReference>
<dbReference type="PANTHER" id="PTHR46186">
    <property type="entry name" value="CYSTATIN"/>
    <property type="match status" value="1"/>
</dbReference>
<dbReference type="PANTHER" id="PTHR46186:SF2">
    <property type="entry name" value="CYSTATIN"/>
    <property type="match status" value="1"/>
</dbReference>
<dbReference type="Pfam" id="PF00031">
    <property type="entry name" value="Cystatin"/>
    <property type="match status" value="1"/>
</dbReference>
<dbReference type="SMART" id="SM00043">
    <property type="entry name" value="CY"/>
    <property type="match status" value="1"/>
</dbReference>
<dbReference type="SUPFAM" id="SSF54403">
    <property type="entry name" value="Cystatin/monellin"/>
    <property type="match status" value="1"/>
</dbReference>
<dbReference type="PROSITE" id="PS00287">
    <property type="entry name" value="CYSTATIN"/>
    <property type="match status" value="1"/>
</dbReference>